<accession>A0B9L2</accession>
<name>RS4_METTP</name>
<sequence length="183" mass="20747">MGYPGKSHKTYDRPRKPWEADRMANEVELIKTYGLRNKRELWKAESILRKYRRVGRMLLASKARGEARADIEAAAVINRLSRFGILKDGADLDAILSLKITDILERRLQTQVYRQGLANTIRQARQFITHGHIQVAGQRVTVPSYLVKRGDEMTIDYYAGSPLAREGHPERSSKIVARTGGSA</sequence>
<gene>
    <name evidence="1" type="primary">rps4</name>
    <name type="ordered locus">Mthe_1619</name>
</gene>
<comment type="function">
    <text evidence="1">One of the primary rRNA binding proteins, it binds directly to 16S rRNA where it nucleates assembly of the body of the 30S subunit.</text>
</comment>
<comment type="function">
    <text evidence="1">With S5 and S12 plays an important role in translational accuracy.</text>
</comment>
<comment type="subunit">
    <text evidence="1">Part of the 30S ribosomal subunit. Contacts protein S5. The interaction surface between S4 and S5 is involved in control of translational fidelity.</text>
</comment>
<comment type="similarity">
    <text evidence="1">Belongs to the universal ribosomal protein uS4 family.</text>
</comment>
<dbReference type="EMBL" id="CP000477">
    <property type="protein sequence ID" value="ABK15386.1"/>
    <property type="molecule type" value="Genomic_DNA"/>
</dbReference>
<dbReference type="RefSeq" id="WP_011696764.1">
    <property type="nucleotide sequence ID" value="NC_008553.1"/>
</dbReference>
<dbReference type="SMR" id="A0B9L2"/>
<dbReference type="STRING" id="349307.Mthe_1619"/>
<dbReference type="GeneID" id="4462196"/>
<dbReference type="KEGG" id="mtp:Mthe_1619"/>
<dbReference type="HOGENOM" id="CLU_089738_1_1_2"/>
<dbReference type="OrthoDB" id="10429at2157"/>
<dbReference type="Proteomes" id="UP000000674">
    <property type="component" value="Chromosome"/>
</dbReference>
<dbReference type="GO" id="GO:0015935">
    <property type="term" value="C:small ribosomal subunit"/>
    <property type="evidence" value="ECO:0007669"/>
    <property type="project" value="InterPro"/>
</dbReference>
<dbReference type="GO" id="GO:0019843">
    <property type="term" value="F:rRNA binding"/>
    <property type="evidence" value="ECO:0007669"/>
    <property type="project" value="UniProtKB-UniRule"/>
</dbReference>
<dbReference type="GO" id="GO:0003735">
    <property type="term" value="F:structural constituent of ribosome"/>
    <property type="evidence" value="ECO:0007669"/>
    <property type="project" value="InterPro"/>
</dbReference>
<dbReference type="GO" id="GO:0042274">
    <property type="term" value="P:ribosomal small subunit biogenesis"/>
    <property type="evidence" value="ECO:0007669"/>
    <property type="project" value="TreeGrafter"/>
</dbReference>
<dbReference type="GO" id="GO:0006412">
    <property type="term" value="P:translation"/>
    <property type="evidence" value="ECO:0007669"/>
    <property type="project" value="UniProtKB-UniRule"/>
</dbReference>
<dbReference type="CDD" id="cd00165">
    <property type="entry name" value="S4"/>
    <property type="match status" value="1"/>
</dbReference>
<dbReference type="Gene3D" id="3.10.290.10">
    <property type="entry name" value="RNA-binding S4 domain"/>
    <property type="match status" value="1"/>
</dbReference>
<dbReference type="HAMAP" id="MF_01306_A">
    <property type="entry name" value="Ribosomal_uS4_A"/>
    <property type="match status" value="1"/>
</dbReference>
<dbReference type="InterPro" id="IPR022801">
    <property type="entry name" value="Ribosomal_uS4"/>
</dbReference>
<dbReference type="InterPro" id="IPR022802">
    <property type="entry name" value="Ribosomal_uS4_arc"/>
</dbReference>
<dbReference type="InterPro" id="IPR018079">
    <property type="entry name" value="Ribosomal_uS4_CS"/>
</dbReference>
<dbReference type="InterPro" id="IPR005710">
    <property type="entry name" value="Ribosomal_uS4_euk/arc"/>
</dbReference>
<dbReference type="InterPro" id="IPR001912">
    <property type="entry name" value="Ribosomal_uS4_N"/>
</dbReference>
<dbReference type="InterPro" id="IPR002942">
    <property type="entry name" value="S4_RNA-bd"/>
</dbReference>
<dbReference type="InterPro" id="IPR036986">
    <property type="entry name" value="S4_RNA-bd_sf"/>
</dbReference>
<dbReference type="NCBIfam" id="NF003139">
    <property type="entry name" value="PRK04051.1"/>
    <property type="match status" value="1"/>
</dbReference>
<dbReference type="NCBIfam" id="TIGR01018">
    <property type="entry name" value="uS4_arch"/>
    <property type="match status" value="1"/>
</dbReference>
<dbReference type="PANTHER" id="PTHR11831">
    <property type="entry name" value="30S 40S RIBOSOMAL PROTEIN"/>
    <property type="match status" value="1"/>
</dbReference>
<dbReference type="PANTHER" id="PTHR11831:SF5">
    <property type="entry name" value="40S RIBOSOMAL PROTEIN S9"/>
    <property type="match status" value="1"/>
</dbReference>
<dbReference type="Pfam" id="PF00163">
    <property type="entry name" value="Ribosomal_S4"/>
    <property type="match status" value="1"/>
</dbReference>
<dbReference type="Pfam" id="PF01479">
    <property type="entry name" value="S4"/>
    <property type="match status" value="1"/>
</dbReference>
<dbReference type="SMART" id="SM01390">
    <property type="entry name" value="Ribosomal_S4"/>
    <property type="match status" value="1"/>
</dbReference>
<dbReference type="SMART" id="SM00363">
    <property type="entry name" value="S4"/>
    <property type="match status" value="1"/>
</dbReference>
<dbReference type="SUPFAM" id="SSF55174">
    <property type="entry name" value="Alpha-L RNA-binding motif"/>
    <property type="match status" value="1"/>
</dbReference>
<dbReference type="PROSITE" id="PS00632">
    <property type="entry name" value="RIBOSOMAL_S4"/>
    <property type="match status" value="1"/>
</dbReference>
<dbReference type="PROSITE" id="PS50889">
    <property type="entry name" value="S4"/>
    <property type="match status" value="1"/>
</dbReference>
<reference key="1">
    <citation type="submission" date="2006-10" db="EMBL/GenBank/DDBJ databases">
        <title>Complete sequence of Methanosaeta thermophila PT.</title>
        <authorList>
            <consortium name="US DOE Joint Genome Institute"/>
            <person name="Copeland A."/>
            <person name="Lucas S."/>
            <person name="Lapidus A."/>
            <person name="Barry K."/>
            <person name="Detter J.C."/>
            <person name="Glavina del Rio T."/>
            <person name="Hammon N."/>
            <person name="Israni S."/>
            <person name="Pitluck S."/>
            <person name="Chain P."/>
            <person name="Malfatti S."/>
            <person name="Shin M."/>
            <person name="Vergez L."/>
            <person name="Schmutz J."/>
            <person name="Larimer F."/>
            <person name="Land M."/>
            <person name="Hauser L."/>
            <person name="Kyrpides N."/>
            <person name="Kim E."/>
            <person name="Smith K.S."/>
            <person name="Ingram-Smith C."/>
            <person name="Richardson P."/>
        </authorList>
    </citation>
    <scope>NUCLEOTIDE SEQUENCE [LARGE SCALE GENOMIC DNA]</scope>
    <source>
        <strain>DSM 6194 / JCM 14653 / NBRC 101360 / PT</strain>
    </source>
</reference>
<proteinExistence type="inferred from homology"/>
<evidence type="ECO:0000255" key="1">
    <source>
        <dbReference type="HAMAP-Rule" id="MF_01306"/>
    </source>
</evidence>
<evidence type="ECO:0000305" key="2"/>
<keyword id="KW-1185">Reference proteome</keyword>
<keyword id="KW-0687">Ribonucleoprotein</keyword>
<keyword id="KW-0689">Ribosomal protein</keyword>
<keyword id="KW-0694">RNA-binding</keyword>
<keyword id="KW-0699">rRNA-binding</keyword>
<organism>
    <name type="scientific">Methanothrix thermoacetophila (strain DSM 6194 / JCM 14653 / NBRC 101360 / PT)</name>
    <name type="common">Methanosaeta thermophila</name>
    <dbReference type="NCBI Taxonomy" id="349307"/>
    <lineage>
        <taxon>Archaea</taxon>
        <taxon>Methanobacteriati</taxon>
        <taxon>Methanobacteriota</taxon>
        <taxon>Stenosarchaea group</taxon>
        <taxon>Methanomicrobia</taxon>
        <taxon>Methanotrichales</taxon>
        <taxon>Methanotrichaceae</taxon>
        <taxon>Methanothrix</taxon>
    </lineage>
</organism>
<protein>
    <recommendedName>
        <fullName evidence="1">Small ribosomal subunit protein uS4</fullName>
    </recommendedName>
    <alternativeName>
        <fullName evidence="2">30S ribosomal protein S4</fullName>
    </alternativeName>
</protein>
<feature type="chain" id="PRO_0000293407" description="Small ribosomal subunit protein uS4">
    <location>
        <begin position="1"/>
        <end position="183"/>
    </location>
</feature>
<feature type="domain" description="S4 RNA-binding" evidence="1">
    <location>
        <begin position="106"/>
        <end position="168"/>
    </location>
</feature>